<dbReference type="EC" id="4.6.1.12" evidence="1"/>
<dbReference type="EMBL" id="CP000507">
    <property type="protein sequence ID" value="ABL99246.1"/>
    <property type="molecule type" value="Genomic_DNA"/>
</dbReference>
<dbReference type="RefSeq" id="WP_011759155.1">
    <property type="nucleotide sequence ID" value="NC_008700.1"/>
</dbReference>
<dbReference type="SMR" id="A1S4E0"/>
<dbReference type="STRING" id="326297.Sama_1039"/>
<dbReference type="KEGG" id="saz:Sama_1039"/>
<dbReference type="eggNOG" id="COG0245">
    <property type="taxonomic scope" value="Bacteria"/>
</dbReference>
<dbReference type="HOGENOM" id="CLU_084630_2_0_6"/>
<dbReference type="OrthoDB" id="9804336at2"/>
<dbReference type="UniPathway" id="UPA00056">
    <property type="reaction ID" value="UER00095"/>
</dbReference>
<dbReference type="Proteomes" id="UP000009175">
    <property type="component" value="Chromosome"/>
</dbReference>
<dbReference type="GO" id="GO:0008685">
    <property type="term" value="F:2-C-methyl-D-erythritol 2,4-cyclodiphosphate synthase activity"/>
    <property type="evidence" value="ECO:0007669"/>
    <property type="project" value="UniProtKB-UniRule"/>
</dbReference>
<dbReference type="GO" id="GO:0046872">
    <property type="term" value="F:metal ion binding"/>
    <property type="evidence" value="ECO:0007669"/>
    <property type="project" value="UniProtKB-KW"/>
</dbReference>
<dbReference type="GO" id="GO:0019288">
    <property type="term" value="P:isopentenyl diphosphate biosynthetic process, methylerythritol 4-phosphate pathway"/>
    <property type="evidence" value="ECO:0007669"/>
    <property type="project" value="UniProtKB-UniRule"/>
</dbReference>
<dbReference type="GO" id="GO:0016114">
    <property type="term" value="P:terpenoid biosynthetic process"/>
    <property type="evidence" value="ECO:0007669"/>
    <property type="project" value="InterPro"/>
</dbReference>
<dbReference type="CDD" id="cd00554">
    <property type="entry name" value="MECDP_synthase"/>
    <property type="match status" value="1"/>
</dbReference>
<dbReference type="FunFam" id="3.30.1330.50:FF:000001">
    <property type="entry name" value="2-C-methyl-D-erythritol 2,4-cyclodiphosphate synthase"/>
    <property type="match status" value="1"/>
</dbReference>
<dbReference type="Gene3D" id="3.30.1330.50">
    <property type="entry name" value="2-C-methyl-D-erythritol 2,4-cyclodiphosphate synthase"/>
    <property type="match status" value="1"/>
</dbReference>
<dbReference type="HAMAP" id="MF_00107">
    <property type="entry name" value="IspF"/>
    <property type="match status" value="1"/>
</dbReference>
<dbReference type="InterPro" id="IPR003526">
    <property type="entry name" value="MECDP_synthase"/>
</dbReference>
<dbReference type="InterPro" id="IPR020555">
    <property type="entry name" value="MECDP_synthase_CS"/>
</dbReference>
<dbReference type="InterPro" id="IPR036571">
    <property type="entry name" value="MECDP_synthase_sf"/>
</dbReference>
<dbReference type="NCBIfam" id="TIGR00151">
    <property type="entry name" value="ispF"/>
    <property type="match status" value="1"/>
</dbReference>
<dbReference type="PANTHER" id="PTHR43181">
    <property type="entry name" value="2-C-METHYL-D-ERYTHRITOL 2,4-CYCLODIPHOSPHATE SYNTHASE, CHLOROPLASTIC"/>
    <property type="match status" value="1"/>
</dbReference>
<dbReference type="PANTHER" id="PTHR43181:SF1">
    <property type="entry name" value="2-C-METHYL-D-ERYTHRITOL 2,4-CYCLODIPHOSPHATE SYNTHASE, CHLOROPLASTIC"/>
    <property type="match status" value="1"/>
</dbReference>
<dbReference type="Pfam" id="PF02542">
    <property type="entry name" value="YgbB"/>
    <property type="match status" value="1"/>
</dbReference>
<dbReference type="SUPFAM" id="SSF69765">
    <property type="entry name" value="IpsF-like"/>
    <property type="match status" value="1"/>
</dbReference>
<dbReference type="PROSITE" id="PS01350">
    <property type="entry name" value="ISPF"/>
    <property type="match status" value="1"/>
</dbReference>
<organism>
    <name type="scientific">Shewanella amazonensis (strain ATCC BAA-1098 / SB2B)</name>
    <dbReference type="NCBI Taxonomy" id="326297"/>
    <lineage>
        <taxon>Bacteria</taxon>
        <taxon>Pseudomonadati</taxon>
        <taxon>Pseudomonadota</taxon>
        <taxon>Gammaproteobacteria</taxon>
        <taxon>Alteromonadales</taxon>
        <taxon>Shewanellaceae</taxon>
        <taxon>Shewanella</taxon>
    </lineage>
</organism>
<reference key="1">
    <citation type="submission" date="2006-12" db="EMBL/GenBank/DDBJ databases">
        <title>Complete sequence of Shewanella amazonensis SB2B.</title>
        <authorList>
            <consortium name="US DOE Joint Genome Institute"/>
            <person name="Copeland A."/>
            <person name="Lucas S."/>
            <person name="Lapidus A."/>
            <person name="Barry K."/>
            <person name="Detter J.C."/>
            <person name="Glavina del Rio T."/>
            <person name="Hammon N."/>
            <person name="Israni S."/>
            <person name="Dalin E."/>
            <person name="Tice H."/>
            <person name="Pitluck S."/>
            <person name="Munk A.C."/>
            <person name="Brettin T."/>
            <person name="Bruce D."/>
            <person name="Han C."/>
            <person name="Tapia R."/>
            <person name="Gilna P."/>
            <person name="Schmutz J."/>
            <person name="Larimer F."/>
            <person name="Land M."/>
            <person name="Hauser L."/>
            <person name="Kyrpides N."/>
            <person name="Mikhailova N."/>
            <person name="Fredrickson J."/>
            <person name="Richardson P."/>
        </authorList>
    </citation>
    <scope>NUCLEOTIDE SEQUENCE [LARGE SCALE GENOMIC DNA]</scope>
    <source>
        <strain>ATCC BAA-1098 / SB2B</strain>
    </source>
</reference>
<comment type="function">
    <text evidence="1">Involved in the biosynthesis of isopentenyl diphosphate (IPP) and dimethylallyl diphosphate (DMAPP), two major building blocks of isoprenoid compounds. Catalyzes the conversion of 4-diphosphocytidyl-2-C-methyl-D-erythritol 2-phosphate (CDP-ME2P) to 2-C-methyl-D-erythritol 2,4-cyclodiphosphate (ME-CPP) with a corresponding release of cytidine 5-monophosphate (CMP).</text>
</comment>
<comment type="catalytic activity">
    <reaction evidence="1">
        <text>4-CDP-2-C-methyl-D-erythritol 2-phosphate = 2-C-methyl-D-erythritol 2,4-cyclic diphosphate + CMP</text>
        <dbReference type="Rhea" id="RHEA:23864"/>
        <dbReference type="ChEBI" id="CHEBI:57919"/>
        <dbReference type="ChEBI" id="CHEBI:58483"/>
        <dbReference type="ChEBI" id="CHEBI:60377"/>
        <dbReference type="EC" id="4.6.1.12"/>
    </reaction>
</comment>
<comment type="cofactor">
    <cofactor evidence="1">
        <name>a divalent metal cation</name>
        <dbReference type="ChEBI" id="CHEBI:60240"/>
    </cofactor>
    <text evidence="1">Binds 1 divalent metal cation per subunit.</text>
</comment>
<comment type="pathway">
    <text evidence="1">Isoprenoid biosynthesis; isopentenyl diphosphate biosynthesis via DXP pathway; isopentenyl diphosphate from 1-deoxy-D-xylulose 5-phosphate: step 4/6.</text>
</comment>
<comment type="subunit">
    <text evidence="1">Homotrimer.</text>
</comment>
<comment type="similarity">
    <text evidence="1">Belongs to the IspF family.</text>
</comment>
<protein>
    <recommendedName>
        <fullName evidence="1">2-C-methyl-D-erythritol 2,4-cyclodiphosphate synthase</fullName>
        <shortName evidence="1">MECDP-synthase</shortName>
        <shortName evidence="1">MECPP-synthase</shortName>
        <shortName evidence="1">MECPS</shortName>
        <ecNumber evidence="1">4.6.1.12</ecNumber>
    </recommendedName>
</protein>
<proteinExistence type="inferred from homology"/>
<keyword id="KW-0414">Isoprene biosynthesis</keyword>
<keyword id="KW-0456">Lyase</keyword>
<keyword id="KW-0479">Metal-binding</keyword>
<keyword id="KW-1185">Reference proteome</keyword>
<sequence length="160" mass="17279">MKIRIGHGFDVHKFGADRPLILCGIEVPYETGLIAHSDGDVVLHAISDAILGAMALGDIGKHFPDTDAAYEGADSRVLLRHCFKLAREHGFAIGNLDVTIIAQAPKMLPHIEAMRAVLADDLQTELNNINVKATTTEKLGFTGRKEGIAVEAVVLMENVK</sequence>
<gene>
    <name evidence="1" type="primary">ispF</name>
    <name type="ordered locus">Sama_1039</name>
</gene>
<evidence type="ECO:0000255" key="1">
    <source>
        <dbReference type="HAMAP-Rule" id="MF_00107"/>
    </source>
</evidence>
<feature type="chain" id="PRO_1000022875" description="2-C-methyl-D-erythritol 2,4-cyclodiphosphate synthase">
    <location>
        <begin position="1"/>
        <end position="160"/>
    </location>
</feature>
<feature type="binding site" evidence="1">
    <location>
        <begin position="10"/>
        <end position="12"/>
    </location>
    <ligand>
        <name>4-CDP-2-C-methyl-D-erythritol 2-phosphate</name>
        <dbReference type="ChEBI" id="CHEBI:57919"/>
    </ligand>
</feature>
<feature type="binding site" evidence="1">
    <location>
        <position position="10"/>
    </location>
    <ligand>
        <name>a divalent metal cation</name>
        <dbReference type="ChEBI" id="CHEBI:60240"/>
    </ligand>
</feature>
<feature type="binding site" evidence="1">
    <location>
        <position position="12"/>
    </location>
    <ligand>
        <name>a divalent metal cation</name>
        <dbReference type="ChEBI" id="CHEBI:60240"/>
    </ligand>
</feature>
<feature type="binding site" evidence="1">
    <location>
        <begin position="36"/>
        <end position="37"/>
    </location>
    <ligand>
        <name>4-CDP-2-C-methyl-D-erythritol 2-phosphate</name>
        <dbReference type="ChEBI" id="CHEBI:57919"/>
    </ligand>
</feature>
<feature type="binding site" evidence="1">
    <location>
        <position position="44"/>
    </location>
    <ligand>
        <name>a divalent metal cation</name>
        <dbReference type="ChEBI" id="CHEBI:60240"/>
    </ligand>
</feature>
<feature type="binding site" evidence="1">
    <location>
        <begin position="58"/>
        <end position="60"/>
    </location>
    <ligand>
        <name>4-CDP-2-C-methyl-D-erythritol 2-phosphate</name>
        <dbReference type="ChEBI" id="CHEBI:57919"/>
    </ligand>
</feature>
<feature type="binding site" evidence="1">
    <location>
        <begin position="63"/>
        <end position="67"/>
    </location>
    <ligand>
        <name>4-CDP-2-C-methyl-D-erythritol 2-phosphate</name>
        <dbReference type="ChEBI" id="CHEBI:57919"/>
    </ligand>
</feature>
<feature type="binding site" evidence="1">
    <location>
        <begin position="102"/>
        <end position="108"/>
    </location>
    <ligand>
        <name>4-CDP-2-C-methyl-D-erythritol 2-phosphate</name>
        <dbReference type="ChEBI" id="CHEBI:57919"/>
    </ligand>
</feature>
<feature type="binding site" evidence="1">
    <location>
        <begin position="134"/>
        <end position="137"/>
    </location>
    <ligand>
        <name>4-CDP-2-C-methyl-D-erythritol 2-phosphate</name>
        <dbReference type="ChEBI" id="CHEBI:57919"/>
    </ligand>
</feature>
<feature type="binding site" evidence="1">
    <location>
        <position position="141"/>
    </location>
    <ligand>
        <name>4-CDP-2-C-methyl-D-erythritol 2-phosphate</name>
        <dbReference type="ChEBI" id="CHEBI:57919"/>
    </ligand>
</feature>
<feature type="binding site" evidence="1">
    <location>
        <position position="144"/>
    </location>
    <ligand>
        <name>4-CDP-2-C-methyl-D-erythritol 2-phosphate</name>
        <dbReference type="ChEBI" id="CHEBI:57919"/>
    </ligand>
</feature>
<feature type="site" description="Transition state stabilizer" evidence="1">
    <location>
        <position position="36"/>
    </location>
</feature>
<feature type="site" description="Transition state stabilizer" evidence="1">
    <location>
        <position position="135"/>
    </location>
</feature>
<accession>A1S4E0</accession>
<name>ISPF_SHEAM</name>